<protein>
    <recommendedName>
        <fullName>Lipase chaperone</fullName>
    </recommendedName>
    <alternativeName>
        <fullName>Lipase foldase</fullName>
    </alternativeName>
    <alternativeName>
        <fullName>Lipase helper protein</fullName>
    </alternativeName>
    <alternativeName>
        <fullName>Lipase modulator</fullName>
    </alternativeName>
</protein>
<gene>
    <name type="primary">lifO</name>
    <name type="synonym">lipB</name>
    <name type="synonym">lipH</name>
    <name type="ordered locus">PA2863</name>
</gene>
<sequence length="340" mass="37687">MKKILLLIPLAFAASLAWFVWLEPSPAPETAPPASPQAGADRAPPAASAGEAVPAPQVMPAKVAPLPTSFRGTSVDGSFSVDASGNLLITRDIRNLFDYFLSAVGEEPLQQSLDRLRAYIAAELQEPARGQALALMQQYIDYKKELVLLERDLPRLADLDALRQREAAVKALRARIFSNEAHVAFFADEETYNQFTLERLAIRQDGKLSAEEKAAAIDRLRASLPEDQQESVLPQLQSELQQQTAALQAAGAGPEAIRQMRQQLVGAEATTRLEQLDRQRSAWKGRLDDYFAEKSRIEGNTGLSEADRRAAVERLAEERFSEQERLRLGALEQMRQAEQR</sequence>
<proteinExistence type="evidence at protein level"/>
<keyword id="KW-0002">3D-structure</keyword>
<keyword id="KW-0997">Cell inner membrane</keyword>
<keyword id="KW-1003">Cell membrane</keyword>
<keyword id="KW-0143">Chaperone</keyword>
<keyword id="KW-0442">Lipid degradation</keyword>
<keyword id="KW-0443">Lipid metabolism</keyword>
<keyword id="KW-0472">Membrane</keyword>
<keyword id="KW-1185">Reference proteome</keyword>
<keyword id="KW-0812">Transmembrane</keyword>
<keyword id="KW-1133">Transmembrane helix</keyword>
<organism>
    <name type="scientific">Pseudomonas aeruginosa (strain ATCC 15692 / DSM 22644 / CIP 104116 / JCM 14847 / LMG 12228 / 1C / PRS 101 / PAO1)</name>
    <dbReference type="NCBI Taxonomy" id="208964"/>
    <lineage>
        <taxon>Bacteria</taxon>
        <taxon>Pseudomonadati</taxon>
        <taxon>Pseudomonadota</taxon>
        <taxon>Gammaproteobacteria</taxon>
        <taxon>Pseudomonadales</taxon>
        <taxon>Pseudomonadaceae</taxon>
        <taxon>Pseudomonas</taxon>
    </lineage>
</organism>
<feature type="chain" id="PRO_0000218483" description="Lipase chaperone">
    <location>
        <begin position="1"/>
        <end position="340"/>
    </location>
</feature>
<feature type="transmembrane region" description="Helical" evidence="2">
    <location>
        <begin position="4"/>
        <end position="24"/>
    </location>
</feature>
<feature type="region of interest" description="Disordered" evidence="3">
    <location>
        <begin position="29"/>
        <end position="51"/>
    </location>
</feature>
<feature type="compositionally biased region" description="Low complexity" evidence="3">
    <location>
        <begin position="36"/>
        <end position="51"/>
    </location>
</feature>
<feature type="sequence variant" description="In strain: TE3285 and ATCC 31156.">
    <original>A</original>
    <variation>T</variation>
    <location>
        <position position="210"/>
    </location>
</feature>
<feature type="sequence variant" description="In strain: TE3285 and ATCC 31156.">
    <original>T</original>
    <variation>A</variation>
    <location>
        <position position="301"/>
    </location>
</feature>
<feature type="sequence conflict" description="In Ref. 6." evidence="4" ref="6">
    <original>DR</original>
    <variation>VH</variation>
    <location>
        <begin position="41"/>
        <end position="42"/>
    </location>
</feature>
<feature type="strand" evidence="5">
    <location>
        <begin position="67"/>
        <end position="72"/>
    </location>
</feature>
<feature type="strand" evidence="6">
    <location>
        <begin position="80"/>
        <end position="82"/>
    </location>
</feature>
<feature type="strand" evidence="6">
    <location>
        <begin position="85"/>
        <end position="88"/>
    </location>
</feature>
<feature type="helix" evidence="5">
    <location>
        <begin position="93"/>
        <end position="101"/>
    </location>
</feature>
<feature type="strand" evidence="6">
    <location>
        <begin position="106"/>
        <end position="108"/>
    </location>
</feature>
<feature type="helix" evidence="5">
    <location>
        <begin position="111"/>
        <end position="123"/>
    </location>
</feature>
<feature type="helix" evidence="5">
    <location>
        <begin position="126"/>
        <end position="141"/>
    </location>
</feature>
<feature type="turn" evidence="5">
    <location>
        <begin position="142"/>
        <end position="145"/>
    </location>
</feature>
<dbReference type="EMBL" id="AB008452">
    <property type="protein sequence ID" value="BAA23129.1"/>
    <property type="molecule type" value="Genomic_DNA"/>
</dbReference>
<dbReference type="EMBL" id="D50588">
    <property type="protein sequence ID" value="BAA09136.1"/>
    <property type="molecule type" value="Genomic_DNA"/>
</dbReference>
<dbReference type="EMBL" id="X63391">
    <property type="protein sequence ID" value="CAA44998.1"/>
    <property type="status" value="ALT_INIT"/>
    <property type="molecule type" value="Genomic_DNA"/>
</dbReference>
<dbReference type="EMBL" id="AE004091">
    <property type="protein sequence ID" value="AAG06251.1"/>
    <property type="status" value="ALT_INIT"/>
    <property type="molecule type" value="Genomic_DNA"/>
</dbReference>
<dbReference type="PIR" id="C83289">
    <property type="entry name" value="C83289"/>
</dbReference>
<dbReference type="PIR" id="S24161">
    <property type="entry name" value="S24161"/>
</dbReference>
<dbReference type="PIR" id="S25769">
    <property type="entry name" value="S25769"/>
</dbReference>
<dbReference type="RefSeq" id="NP_251553.1">
    <property type="nucleotide sequence ID" value="NC_002516.2"/>
</dbReference>
<dbReference type="RefSeq" id="WP_003119861.1">
    <property type="nucleotide sequence ID" value="NC_002516.2"/>
</dbReference>
<dbReference type="PDB" id="5OVM">
    <property type="method" value="NMR"/>
    <property type="chains" value="A=66-146"/>
</dbReference>
<dbReference type="PDB" id="6GSF">
    <property type="method" value="NMR"/>
    <property type="chains" value="A=66-146"/>
</dbReference>
<dbReference type="PDBsum" id="5OVM"/>
<dbReference type="PDBsum" id="6GSF"/>
<dbReference type="SMR" id="Q01725"/>
<dbReference type="STRING" id="208964.PA2863"/>
<dbReference type="PaxDb" id="208964-PA2863"/>
<dbReference type="DNASU" id="882663"/>
<dbReference type="GeneID" id="882663"/>
<dbReference type="KEGG" id="pae:PA2863"/>
<dbReference type="PATRIC" id="fig|208964.12.peg.3003"/>
<dbReference type="PseudoCAP" id="PA2863"/>
<dbReference type="HOGENOM" id="CLU_064928_0_0_6"/>
<dbReference type="InParanoid" id="Q01725"/>
<dbReference type="OrthoDB" id="7025807at2"/>
<dbReference type="Proteomes" id="UP000002438">
    <property type="component" value="Chromosome"/>
</dbReference>
<dbReference type="GO" id="GO:0005886">
    <property type="term" value="C:plasma membrane"/>
    <property type="evidence" value="ECO:0007669"/>
    <property type="project" value="UniProtKB-SubCell"/>
</dbReference>
<dbReference type="GO" id="GO:0051082">
    <property type="term" value="F:unfolded protein binding"/>
    <property type="evidence" value="ECO:0007669"/>
    <property type="project" value="UniProtKB-UniRule"/>
</dbReference>
<dbReference type="GO" id="GO:0044248">
    <property type="term" value="P:cellular catabolic process"/>
    <property type="evidence" value="ECO:0000314"/>
    <property type="project" value="PseudoCAP"/>
</dbReference>
<dbReference type="GO" id="GO:0016042">
    <property type="term" value="P:lipid catabolic process"/>
    <property type="evidence" value="ECO:0007669"/>
    <property type="project" value="UniProtKB-UniRule"/>
</dbReference>
<dbReference type="GO" id="GO:0006457">
    <property type="term" value="P:protein folding"/>
    <property type="evidence" value="ECO:0007669"/>
    <property type="project" value="UniProtKB-UniRule"/>
</dbReference>
<dbReference type="HAMAP" id="MF_00790">
    <property type="entry name" value="Lipase_chap"/>
    <property type="match status" value="1"/>
</dbReference>
<dbReference type="InterPro" id="IPR004961">
    <property type="entry name" value="Lipase_chaperone"/>
</dbReference>
<dbReference type="NCBIfam" id="NF002334">
    <property type="entry name" value="PRK01294.1-2"/>
    <property type="match status" value="1"/>
</dbReference>
<dbReference type="Pfam" id="PF03280">
    <property type="entry name" value="Lipase_chap"/>
    <property type="match status" value="1"/>
</dbReference>
<dbReference type="SUPFAM" id="SSF158855">
    <property type="entry name" value="Lipase chaperone-like"/>
    <property type="match status" value="1"/>
</dbReference>
<reference key="1">
    <citation type="journal article" date="1992" name="Arch. Biochem. Biophys.">
        <title>Purification, molecular cloning, and expression of lipase from Pseudomonas aeruginosa.</title>
        <authorList>
            <person name="Chihara-Siomi M."/>
            <person name="Yoshikawa K."/>
            <person name="Oshima-Hirayama N."/>
            <person name="Yamamoto K."/>
            <person name="Sogabe Y."/>
            <person name="Nakatani T."/>
            <person name="Nishioka T."/>
            <person name="Oda J."/>
        </authorList>
    </citation>
    <scope>NUCLEOTIDE SEQUENCE [GENOMIC DNA]</scope>
    <source>
        <strain>TE3285</strain>
    </source>
</reference>
<reference key="2">
    <citation type="submission" date="1997-10" db="EMBL/GenBank/DDBJ databases">
        <authorList>
            <person name="Shibata H."/>
        </authorList>
    </citation>
    <scope>SEQUENCE REVISION</scope>
</reference>
<reference key="3">
    <citation type="journal article" date="1996" name="J. Biochem.">
        <title>Substitutions of Ser for Asn-163, and Pro for Leu-264 are important for stabilization of lipase from Pseudomonas aeruginosa.</title>
        <authorList>
            <person name="Shinkai A."/>
            <person name="Hirano A."/>
            <person name="Aisaka K."/>
        </authorList>
    </citation>
    <scope>NUCLEOTIDE SEQUENCE [GENOMIC DNA]</scope>
    <source>
        <strain>ATCC 31156 / FERM-P 2611</strain>
    </source>
</reference>
<reference key="4">
    <citation type="journal article" date="1992" name="J. Gen. Microbiol.">
        <title>Molecular genetics of the extracellular lipase of Pseudomonas aeruginosa PAO1.</title>
        <authorList>
            <person name="Wohlfarth S."/>
            <person name="Hoesche C."/>
            <person name="Strunk C."/>
            <person name="Winkler U.K."/>
        </authorList>
    </citation>
    <scope>NUCLEOTIDE SEQUENCE [GENOMIC DNA]</scope>
    <source>
        <strain>ATCC 15692 / DSM 22644 / CIP 104116 / JCM 14847 / LMG 12228 / 1C / PRS 101 / PAO1</strain>
    </source>
</reference>
<reference key="5">
    <citation type="submission" date="1994-05" db="EMBL/GenBank/DDBJ databases">
        <authorList>
            <person name="Wohlfarth S."/>
        </authorList>
    </citation>
    <scope>SEQUENCE REVISION</scope>
</reference>
<reference key="6">
    <citation type="journal article" date="2000" name="Nature">
        <title>Complete genome sequence of Pseudomonas aeruginosa PAO1, an opportunistic pathogen.</title>
        <authorList>
            <person name="Stover C.K."/>
            <person name="Pham X.-Q.T."/>
            <person name="Erwin A.L."/>
            <person name="Mizoguchi S.D."/>
            <person name="Warrener P."/>
            <person name="Hickey M.J."/>
            <person name="Brinkman F.S.L."/>
            <person name="Hufnagle W.O."/>
            <person name="Kowalik D.J."/>
            <person name="Lagrou M."/>
            <person name="Garber R.L."/>
            <person name="Goltry L."/>
            <person name="Tolentino E."/>
            <person name="Westbrock-Wadman S."/>
            <person name="Yuan Y."/>
            <person name="Brody L.L."/>
            <person name="Coulter S.N."/>
            <person name="Folger K.R."/>
            <person name="Kas A."/>
            <person name="Larbig K."/>
            <person name="Lim R.M."/>
            <person name="Smith K.A."/>
            <person name="Spencer D.H."/>
            <person name="Wong G.K.-S."/>
            <person name="Wu Z."/>
            <person name="Paulsen I.T."/>
            <person name="Reizer J."/>
            <person name="Saier M.H. Jr."/>
            <person name="Hancock R.E.W."/>
            <person name="Lory S."/>
            <person name="Olson M.V."/>
        </authorList>
    </citation>
    <scope>NUCLEOTIDE SEQUENCE [LARGE SCALE GENOMIC DNA]</scope>
    <source>
        <strain>ATCC 15692 / DSM 22644 / CIP 104116 / JCM 14847 / LMG 12228 / 1C / PRS 101 / PAO1</strain>
    </source>
</reference>
<name>LIFO_PSEAE</name>
<accession>Q01725</accession>
<accession>P95420</accession>
<accession>Q04591</accession>
<evidence type="ECO:0000250" key="1"/>
<evidence type="ECO:0000255" key="2"/>
<evidence type="ECO:0000256" key="3">
    <source>
        <dbReference type="SAM" id="MobiDB-lite"/>
    </source>
</evidence>
<evidence type="ECO:0000305" key="4"/>
<evidence type="ECO:0007829" key="5">
    <source>
        <dbReference type="PDB" id="5OVM"/>
    </source>
</evidence>
<evidence type="ECO:0007829" key="6">
    <source>
        <dbReference type="PDB" id="6GSF"/>
    </source>
</evidence>
<comment type="function">
    <text evidence="1">May be involved in the folding of the extracellular lipase during its passage through the periplasm.</text>
</comment>
<comment type="subcellular location">
    <subcellularLocation>
        <location evidence="1">Cell inner membrane</location>
        <topology evidence="1">Single-pass membrane protein</topology>
        <orientation evidence="1">Periplasmic side</orientation>
    </subcellularLocation>
</comment>
<comment type="similarity">
    <text evidence="4">Belongs to the lipase chaperone family.</text>
</comment>
<comment type="sequence caution" evidence="4">
    <conflict type="erroneous initiation">
        <sequence resource="EMBL-CDS" id="AAG06251"/>
    </conflict>
</comment>
<comment type="sequence caution" evidence="4">
    <conflict type="erroneous initiation">
        <sequence resource="EMBL-CDS" id="CAA44998"/>
    </conflict>
</comment>